<comment type="function">
    <text evidence="1">Key source of the cellular reductant NADPH which is an important antioxidant factor.</text>
</comment>
<comment type="catalytic activity">
    <reaction>
        <text>NADH + ATP = ADP + NADPH + H(+)</text>
        <dbReference type="Rhea" id="RHEA:12260"/>
        <dbReference type="ChEBI" id="CHEBI:15378"/>
        <dbReference type="ChEBI" id="CHEBI:30616"/>
        <dbReference type="ChEBI" id="CHEBI:57783"/>
        <dbReference type="ChEBI" id="CHEBI:57945"/>
        <dbReference type="ChEBI" id="CHEBI:456216"/>
        <dbReference type="EC" id="2.7.1.86"/>
    </reaction>
</comment>
<comment type="subunit">
    <text evidence="1">Homodimer.</text>
</comment>
<comment type="subcellular location">
    <subcellularLocation>
        <location evidence="1">Cytoplasm</location>
    </subcellularLocation>
</comment>
<comment type="similarity">
    <text evidence="2">Belongs to the NAD kinase family.</text>
</comment>
<gene>
    <name type="ordered locus">Os09g0345700</name>
    <name type="ordered locus">LOC_Os09g17680</name>
    <name type="ORF">OSJNBb0085I16.26</name>
</gene>
<name>NADHK_ORYSJ</name>
<proteinExistence type="evidence at transcript level"/>
<protein>
    <recommendedName>
        <fullName>Probable NADH kinase</fullName>
        <ecNumber>2.7.1.86</ecNumber>
    </recommendedName>
</protein>
<evidence type="ECO:0000250" key="1"/>
<evidence type="ECO:0000305" key="2"/>
<organism>
    <name type="scientific">Oryza sativa subsp. japonica</name>
    <name type="common">Rice</name>
    <dbReference type="NCBI Taxonomy" id="39947"/>
    <lineage>
        <taxon>Eukaryota</taxon>
        <taxon>Viridiplantae</taxon>
        <taxon>Streptophyta</taxon>
        <taxon>Embryophyta</taxon>
        <taxon>Tracheophyta</taxon>
        <taxon>Spermatophyta</taxon>
        <taxon>Magnoliopsida</taxon>
        <taxon>Liliopsida</taxon>
        <taxon>Poales</taxon>
        <taxon>Poaceae</taxon>
        <taxon>BOP clade</taxon>
        <taxon>Oryzoideae</taxon>
        <taxon>Oryzeae</taxon>
        <taxon>Oryzinae</taxon>
        <taxon>Oryza</taxon>
        <taxon>Oryza sativa</taxon>
    </lineage>
</organism>
<accession>Q6EQG2</accession>
<accession>Q0J2G4</accession>
<dbReference type="EC" id="2.7.1.86"/>
<dbReference type="EMBL" id="AP005700">
    <property type="protein sequence ID" value="BAD29108.1"/>
    <property type="molecule type" value="Genomic_DNA"/>
</dbReference>
<dbReference type="EMBL" id="AP008215">
    <property type="protein sequence ID" value="BAF24851.1"/>
    <property type="molecule type" value="Genomic_DNA"/>
</dbReference>
<dbReference type="EMBL" id="AP014965">
    <property type="protein sequence ID" value="BAT07607.1"/>
    <property type="molecule type" value="Genomic_DNA"/>
</dbReference>
<dbReference type="EMBL" id="AK073719">
    <property type="protein sequence ID" value="BAG93606.1"/>
    <property type="molecule type" value="mRNA"/>
</dbReference>
<dbReference type="RefSeq" id="XP_015651403.1">
    <property type="nucleotide sequence ID" value="XM_015795917.1"/>
</dbReference>
<dbReference type="SMR" id="Q6EQG2"/>
<dbReference type="FunCoup" id="Q6EQG2">
    <property type="interactions" value="201"/>
</dbReference>
<dbReference type="STRING" id="39947.Q6EQG2"/>
<dbReference type="PaxDb" id="39947-Q6EQG2"/>
<dbReference type="EnsemblPlants" id="Os09t0345700-01">
    <property type="protein sequence ID" value="Os09t0345700-01"/>
    <property type="gene ID" value="Os09g0345700"/>
</dbReference>
<dbReference type="Gramene" id="Os09t0345700-01">
    <property type="protein sequence ID" value="Os09t0345700-01"/>
    <property type="gene ID" value="Os09g0345700"/>
</dbReference>
<dbReference type="KEGG" id="dosa:Os09g0345700"/>
<dbReference type="eggNOG" id="KOG4180">
    <property type="taxonomic scope" value="Eukaryota"/>
</dbReference>
<dbReference type="HOGENOM" id="CLU_067437_0_0_1"/>
<dbReference type="InParanoid" id="Q6EQG2"/>
<dbReference type="OMA" id="KSVEWKA"/>
<dbReference type="OrthoDB" id="185618at2759"/>
<dbReference type="Proteomes" id="UP000000763">
    <property type="component" value="Chromosome 9"/>
</dbReference>
<dbReference type="Proteomes" id="UP000059680">
    <property type="component" value="Chromosome 9"/>
</dbReference>
<dbReference type="GO" id="GO:0005737">
    <property type="term" value="C:cytoplasm"/>
    <property type="evidence" value="ECO:0007669"/>
    <property type="project" value="UniProtKB-SubCell"/>
</dbReference>
<dbReference type="GO" id="GO:0005524">
    <property type="term" value="F:ATP binding"/>
    <property type="evidence" value="ECO:0007669"/>
    <property type="project" value="UniProtKB-KW"/>
</dbReference>
<dbReference type="GO" id="GO:0003951">
    <property type="term" value="F:NAD+ kinase activity"/>
    <property type="evidence" value="ECO:0000318"/>
    <property type="project" value="GO_Central"/>
</dbReference>
<dbReference type="GO" id="GO:0042736">
    <property type="term" value="F:NADH kinase activity"/>
    <property type="evidence" value="ECO:0007669"/>
    <property type="project" value="UniProtKB-EC"/>
</dbReference>
<dbReference type="GO" id="GO:0019674">
    <property type="term" value="P:NAD metabolic process"/>
    <property type="evidence" value="ECO:0007669"/>
    <property type="project" value="InterPro"/>
</dbReference>
<dbReference type="GO" id="GO:0006741">
    <property type="term" value="P:NADP biosynthetic process"/>
    <property type="evidence" value="ECO:0000318"/>
    <property type="project" value="GO_Central"/>
</dbReference>
<dbReference type="FunFam" id="2.60.200.30:FF:000015">
    <property type="entry name" value="NAD(H) kinase 3"/>
    <property type="match status" value="1"/>
</dbReference>
<dbReference type="FunFam" id="3.40.50.10330:FF:000027">
    <property type="entry name" value="NADH kinase"/>
    <property type="match status" value="1"/>
</dbReference>
<dbReference type="Gene3D" id="3.40.50.10330">
    <property type="entry name" value="Probable inorganic polyphosphate/atp-NAD kinase, domain 1"/>
    <property type="match status" value="1"/>
</dbReference>
<dbReference type="Gene3D" id="2.60.200.30">
    <property type="entry name" value="Probable inorganic polyphosphate/atp-NAD kinase, domain 2"/>
    <property type="match status" value="1"/>
</dbReference>
<dbReference type="InterPro" id="IPR017438">
    <property type="entry name" value="ATP-NAD_kinase_N"/>
</dbReference>
<dbReference type="InterPro" id="IPR017437">
    <property type="entry name" value="ATP-NAD_kinase_PpnK-typ_C"/>
</dbReference>
<dbReference type="InterPro" id="IPR016064">
    <property type="entry name" value="NAD/diacylglycerol_kinase_sf"/>
</dbReference>
<dbReference type="InterPro" id="IPR002504">
    <property type="entry name" value="NADK"/>
</dbReference>
<dbReference type="PANTHER" id="PTHR20275">
    <property type="entry name" value="NAD KINASE"/>
    <property type="match status" value="1"/>
</dbReference>
<dbReference type="PANTHER" id="PTHR20275:SF28">
    <property type="entry name" value="NADH KINASE"/>
    <property type="match status" value="1"/>
</dbReference>
<dbReference type="Pfam" id="PF01513">
    <property type="entry name" value="NAD_kinase"/>
    <property type="match status" value="1"/>
</dbReference>
<dbReference type="SUPFAM" id="SSF111331">
    <property type="entry name" value="NAD kinase/diacylglycerol kinase-like"/>
    <property type="match status" value="1"/>
</dbReference>
<sequence length="325" mass="35517">MALRRVLLFVKPFDVYPPRPLAAAASSPPPPPPPLRVSNPKVLNYLDDRCRVHKETINLCKSVLQRKSIDWISVQRNDMSNPIHDVDLVISVGGDGTLLRASHFLNSSIPVLGVNSDPTCPDEVDELTDEFDARRSTGHLCAATAANFEQILDATLDGSRQPSELSRISVKLNGLQLPTYALNDILVSHPCPASVSRFSFRKRSNTGESSHLINCRSSGLRVATPAGSTAAMLSAGGFVMPISSHELQYMIREPISPRDADKPLLHGLVKQGQHILVVWYNEEGAVYFDGSHVMHSIQHGDTLEISSDAPILKVILPENLLKQGS</sequence>
<keyword id="KW-0067">ATP-binding</keyword>
<keyword id="KW-0963">Cytoplasm</keyword>
<keyword id="KW-0418">Kinase</keyword>
<keyword id="KW-0520">NAD</keyword>
<keyword id="KW-0521">NADP</keyword>
<keyword id="KW-0547">Nucleotide-binding</keyword>
<keyword id="KW-1185">Reference proteome</keyword>
<keyword id="KW-0808">Transferase</keyword>
<feature type="chain" id="PRO_0000233701" description="Probable NADH kinase">
    <location>
        <begin position="1"/>
        <end position="325"/>
    </location>
</feature>
<reference key="1">
    <citation type="journal article" date="2005" name="Nature">
        <title>The map-based sequence of the rice genome.</title>
        <authorList>
            <consortium name="International rice genome sequencing project (IRGSP)"/>
        </authorList>
    </citation>
    <scope>NUCLEOTIDE SEQUENCE [LARGE SCALE GENOMIC DNA]</scope>
    <source>
        <strain>cv. Nipponbare</strain>
    </source>
</reference>
<reference key="2">
    <citation type="journal article" date="2008" name="Nucleic Acids Res.">
        <title>The rice annotation project database (RAP-DB): 2008 update.</title>
        <authorList>
            <consortium name="The rice annotation project (RAP)"/>
        </authorList>
    </citation>
    <scope>GENOME REANNOTATION</scope>
    <source>
        <strain>cv. Nipponbare</strain>
    </source>
</reference>
<reference key="3">
    <citation type="journal article" date="2013" name="Rice">
        <title>Improvement of the Oryza sativa Nipponbare reference genome using next generation sequence and optical map data.</title>
        <authorList>
            <person name="Kawahara Y."/>
            <person name="de la Bastide M."/>
            <person name="Hamilton J.P."/>
            <person name="Kanamori H."/>
            <person name="McCombie W.R."/>
            <person name="Ouyang S."/>
            <person name="Schwartz D.C."/>
            <person name="Tanaka T."/>
            <person name="Wu J."/>
            <person name="Zhou S."/>
            <person name="Childs K.L."/>
            <person name="Davidson R.M."/>
            <person name="Lin H."/>
            <person name="Quesada-Ocampo L."/>
            <person name="Vaillancourt B."/>
            <person name="Sakai H."/>
            <person name="Lee S.S."/>
            <person name="Kim J."/>
            <person name="Numa H."/>
            <person name="Itoh T."/>
            <person name="Buell C.R."/>
            <person name="Matsumoto T."/>
        </authorList>
    </citation>
    <scope>GENOME REANNOTATION</scope>
    <source>
        <strain>cv. Nipponbare</strain>
    </source>
</reference>
<reference key="4">
    <citation type="journal article" date="2003" name="Science">
        <title>Collection, mapping, and annotation of over 28,000 cDNA clones from japonica rice.</title>
        <authorList>
            <consortium name="The rice full-length cDNA consortium"/>
        </authorList>
    </citation>
    <scope>NUCLEOTIDE SEQUENCE [LARGE SCALE MRNA]</scope>
    <source>
        <strain>cv. Nipponbare</strain>
    </source>
</reference>